<sequence>MNYLGGFFMKNLLSMEDLTNEEILSLVKRALELKKRAENKKRNDLFVANLFFENSTRTKKSFEVAEKKLNLNVVDFEVSTSSVQKGETLYDTCKTLEMIGINMLVIRHSENEYYKQLENLKIPIINGGDGSGEHPSQCLLDIMTIYETYGKFDGLNIIIVGDIKNSRVARSNKKALTRLGAKVTFVAPEIWKDESLGEFVNFDDVIDKVDICMLLRVQHERHTDSKEKREFSKENYHKSFGLTEERYKRLKEGAIIMHPAPVNRDVEIADSLVESEKSRIFEQMRNGMFMRQAILEYIIEKNKL</sequence>
<evidence type="ECO:0000255" key="1">
    <source>
        <dbReference type="HAMAP-Rule" id="MF_00001"/>
    </source>
</evidence>
<name>PYRB_FUSNN</name>
<protein>
    <recommendedName>
        <fullName evidence="1">Aspartate carbamoyltransferase catalytic subunit</fullName>
        <ecNumber evidence="1">2.1.3.2</ecNumber>
    </recommendedName>
    <alternativeName>
        <fullName evidence="1">Aspartate transcarbamylase</fullName>
        <shortName evidence="1">ATCase</shortName>
    </alternativeName>
</protein>
<organism>
    <name type="scientific">Fusobacterium nucleatum subsp. nucleatum (strain ATCC 25586 / DSM 15643 / BCRC 10681 / CIP 101130 / JCM 8532 / KCTC 2640 / LMG 13131 / VPI 4355)</name>
    <dbReference type="NCBI Taxonomy" id="190304"/>
    <lineage>
        <taxon>Bacteria</taxon>
        <taxon>Fusobacteriati</taxon>
        <taxon>Fusobacteriota</taxon>
        <taxon>Fusobacteriia</taxon>
        <taxon>Fusobacteriales</taxon>
        <taxon>Fusobacteriaceae</taxon>
        <taxon>Fusobacterium</taxon>
    </lineage>
</organism>
<comment type="function">
    <text evidence="1">Catalyzes the condensation of carbamoyl phosphate and aspartate to form carbamoyl aspartate and inorganic phosphate, the committed step in the de novo pyrimidine nucleotide biosynthesis pathway.</text>
</comment>
<comment type="catalytic activity">
    <reaction evidence="1">
        <text>carbamoyl phosphate + L-aspartate = N-carbamoyl-L-aspartate + phosphate + H(+)</text>
        <dbReference type="Rhea" id="RHEA:20013"/>
        <dbReference type="ChEBI" id="CHEBI:15378"/>
        <dbReference type="ChEBI" id="CHEBI:29991"/>
        <dbReference type="ChEBI" id="CHEBI:32814"/>
        <dbReference type="ChEBI" id="CHEBI:43474"/>
        <dbReference type="ChEBI" id="CHEBI:58228"/>
        <dbReference type="EC" id="2.1.3.2"/>
    </reaction>
</comment>
<comment type="pathway">
    <text evidence="1">Pyrimidine metabolism; UMP biosynthesis via de novo pathway; (S)-dihydroorotate from bicarbonate: step 2/3.</text>
</comment>
<comment type="subunit">
    <text evidence="1">Heterododecamer (2C3:3R2) of six catalytic PyrB chains organized as two trimers (C3), and six regulatory PyrI chains organized as three dimers (R2).</text>
</comment>
<comment type="similarity">
    <text evidence="1">Belongs to the aspartate/ornithine carbamoyltransferase superfamily. ATCase family.</text>
</comment>
<proteinExistence type="inferred from homology"/>
<gene>
    <name evidence="1" type="primary">pyrB</name>
    <name type="ordered locus">FN0419</name>
</gene>
<dbReference type="EC" id="2.1.3.2" evidence="1"/>
<dbReference type="EMBL" id="AE009951">
    <property type="protein sequence ID" value="AAL94622.1"/>
    <property type="molecule type" value="Genomic_DNA"/>
</dbReference>
<dbReference type="RefSeq" id="NP_603323.1">
    <property type="nucleotide sequence ID" value="NC_003454.1"/>
</dbReference>
<dbReference type="SMR" id="Q8RG89"/>
<dbReference type="FunCoup" id="Q8RG89">
    <property type="interactions" value="358"/>
</dbReference>
<dbReference type="STRING" id="190304.FN0419"/>
<dbReference type="PaxDb" id="190304-FN0419"/>
<dbReference type="EnsemblBacteria" id="AAL94622">
    <property type="protein sequence ID" value="AAL94622"/>
    <property type="gene ID" value="FN0419"/>
</dbReference>
<dbReference type="KEGG" id="fnu:FN0419"/>
<dbReference type="PATRIC" id="fig|190304.8.peg.996"/>
<dbReference type="eggNOG" id="COG0540">
    <property type="taxonomic scope" value="Bacteria"/>
</dbReference>
<dbReference type="HOGENOM" id="CLU_043846_2_1_0"/>
<dbReference type="InParanoid" id="Q8RG89"/>
<dbReference type="BioCyc" id="FNUC190304:G1FZS-1013-MONOMER"/>
<dbReference type="UniPathway" id="UPA00070">
    <property type="reaction ID" value="UER00116"/>
</dbReference>
<dbReference type="Proteomes" id="UP000002521">
    <property type="component" value="Chromosome"/>
</dbReference>
<dbReference type="GO" id="GO:0016597">
    <property type="term" value="F:amino acid binding"/>
    <property type="evidence" value="ECO:0007669"/>
    <property type="project" value="InterPro"/>
</dbReference>
<dbReference type="GO" id="GO:0004070">
    <property type="term" value="F:aspartate carbamoyltransferase activity"/>
    <property type="evidence" value="ECO:0007669"/>
    <property type="project" value="UniProtKB-UniRule"/>
</dbReference>
<dbReference type="GO" id="GO:0006207">
    <property type="term" value="P:'de novo' pyrimidine nucleobase biosynthetic process"/>
    <property type="evidence" value="ECO:0007669"/>
    <property type="project" value="InterPro"/>
</dbReference>
<dbReference type="GO" id="GO:0044205">
    <property type="term" value="P:'de novo' UMP biosynthetic process"/>
    <property type="evidence" value="ECO:0007669"/>
    <property type="project" value="UniProtKB-UniRule"/>
</dbReference>
<dbReference type="GO" id="GO:0006520">
    <property type="term" value="P:amino acid metabolic process"/>
    <property type="evidence" value="ECO:0007669"/>
    <property type="project" value="InterPro"/>
</dbReference>
<dbReference type="FunFam" id="3.40.50.1370:FF:000011">
    <property type="entry name" value="Aspartate carbamoyltransferase"/>
    <property type="match status" value="1"/>
</dbReference>
<dbReference type="Gene3D" id="3.40.50.1370">
    <property type="entry name" value="Aspartate/ornithine carbamoyltransferase"/>
    <property type="match status" value="2"/>
</dbReference>
<dbReference type="HAMAP" id="MF_00001">
    <property type="entry name" value="Asp_carb_tr"/>
    <property type="match status" value="1"/>
</dbReference>
<dbReference type="InterPro" id="IPR006132">
    <property type="entry name" value="Asp/Orn_carbamoyltranf_P-bd"/>
</dbReference>
<dbReference type="InterPro" id="IPR006130">
    <property type="entry name" value="Asp/Orn_carbamoylTrfase"/>
</dbReference>
<dbReference type="InterPro" id="IPR036901">
    <property type="entry name" value="Asp/Orn_carbamoylTrfase_sf"/>
</dbReference>
<dbReference type="InterPro" id="IPR002082">
    <property type="entry name" value="Asp_carbamoyltransf"/>
</dbReference>
<dbReference type="InterPro" id="IPR006131">
    <property type="entry name" value="Asp_carbamoyltransf_Asp/Orn-bd"/>
</dbReference>
<dbReference type="NCBIfam" id="TIGR00670">
    <property type="entry name" value="asp_carb_tr"/>
    <property type="match status" value="1"/>
</dbReference>
<dbReference type="NCBIfam" id="NF002032">
    <property type="entry name" value="PRK00856.1"/>
    <property type="match status" value="1"/>
</dbReference>
<dbReference type="PANTHER" id="PTHR45753:SF6">
    <property type="entry name" value="ASPARTATE CARBAMOYLTRANSFERASE"/>
    <property type="match status" value="1"/>
</dbReference>
<dbReference type="PANTHER" id="PTHR45753">
    <property type="entry name" value="ORNITHINE CARBAMOYLTRANSFERASE, MITOCHONDRIAL"/>
    <property type="match status" value="1"/>
</dbReference>
<dbReference type="Pfam" id="PF00185">
    <property type="entry name" value="OTCace"/>
    <property type="match status" value="1"/>
</dbReference>
<dbReference type="Pfam" id="PF02729">
    <property type="entry name" value="OTCace_N"/>
    <property type="match status" value="1"/>
</dbReference>
<dbReference type="PRINTS" id="PR00100">
    <property type="entry name" value="AOTCASE"/>
</dbReference>
<dbReference type="PRINTS" id="PR00101">
    <property type="entry name" value="ATCASE"/>
</dbReference>
<dbReference type="SUPFAM" id="SSF53671">
    <property type="entry name" value="Aspartate/ornithine carbamoyltransferase"/>
    <property type="match status" value="1"/>
</dbReference>
<dbReference type="PROSITE" id="PS00097">
    <property type="entry name" value="CARBAMOYLTRANSFERASE"/>
    <property type="match status" value="1"/>
</dbReference>
<feature type="chain" id="PRO_0000113135" description="Aspartate carbamoyltransferase catalytic subunit">
    <location>
        <begin position="1"/>
        <end position="304"/>
    </location>
</feature>
<feature type="binding site" evidence="1">
    <location>
        <position position="57"/>
    </location>
    <ligand>
        <name>carbamoyl phosphate</name>
        <dbReference type="ChEBI" id="CHEBI:58228"/>
    </ligand>
</feature>
<feature type="binding site" evidence="1">
    <location>
        <position position="58"/>
    </location>
    <ligand>
        <name>carbamoyl phosphate</name>
        <dbReference type="ChEBI" id="CHEBI:58228"/>
    </ligand>
</feature>
<feature type="binding site" evidence="1">
    <location>
        <position position="85"/>
    </location>
    <ligand>
        <name>L-aspartate</name>
        <dbReference type="ChEBI" id="CHEBI:29991"/>
    </ligand>
</feature>
<feature type="binding site" evidence="1">
    <location>
        <position position="107"/>
    </location>
    <ligand>
        <name>carbamoyl phosphate</name>
        <dbReference type="ChEBI" id="CHEBI:58228"/>
    </ligand>
</feature>
<feature type="binding site" evidence="1">
    <location>
        <position position="134"/>
    </location>
    <ligand>
        <name>carbamoyl phosphate</name>
        <dbReference type="ChEBI" id="CHEBI:58228"/>
    </ligand>
</feature>
<feature type="binding site" evidence="1">
    <location>
        <position position="137"/>
    </location>
    <ligand>
        <name>carbamoyl phosphate</name>
        <dbReference type="ChEBI" id="CHEBI:58228"/>
    </ligand>
</feature>
<feature type="binding site" evidence="1">
    <location>
        <position position="167"/>
    </location>
    <ligand>
        <name>L-aspartate</name>
        <dbReference type="ChEBI" id="CHEBI:29991"/>
    </ligand>
</feature>
<feature type="binding site" evidence="1">
    <location>
        <position position="216"/>
    </location>
    <ligand>
        <name>L-aspartate</name>
        <dbReference type="ChEBI" id="CHEBI:29991"/>
    </ligand>
</feature>
<feature type="binding site" evidence="1">
    <location>
        <position position="260"/>
    </location>
    <ligand>
        <name>carbamoyl phosphate</name>
        <dbReference type="ChEBI" id="CHEBI:58228"/>
    </ligand>
</feature>
<feature type="binding site" evidence="1">
    <location>
        <position position="261"/>
    </location>
    <ligand>
        <name>carbamoyl phosphate</name>
        <dbReference type="ChEBI" id="CHEBI:58228"/>
    </ligand>
</feature>
<reference key="1">
    <citation type="journal article" date="2002" name="J. Bacteriol.">
        <title>Genome sequence and analysis of the oral bacterium Fusobacterium nucleatum strain ATCC 25586.</title>
        <authorList>
            <person name="Kapatral V."/>
            <person name="Anderson I."/>
            <person name="Ivanova N."/>
            <person name="Reznik G."/>
            <person name="Los T."/>
            <person name="Lykidis A."/>
            <person name="Bhattacharyya A."/>
            <person name="Bartman A."/>
            <person name="Gardner W."/>
            <person name="Grechkin G."/>
            <person name="Zhu L."/>
            <person name="Vasieva O."/>
            <person name="Chu L."/>
            <person name="Kogan Y."/>
            <person name="Chaga O."/>
            <person name="Goltsman E."/>
            <person name="Bernal A."/>
            <person name="Larsen N."/>
            <person name="D'Souza M."/>
            <person name="Walunas T."/>
            <person name="Pusch G."/>
            <person name="Haselkorn R."/>
            <person name="Fonstein M."/>
            <person name="Kyrpides N.C."/>
            <person name="Overbeek R."/>
        </authorList>
    </citation>
    <scope>NUCLEOTIDE SEQUENCE [LARGE SCALE GENOMIC DNA]</scope>
    <source>
        <strain>ATCC 25586 / DSM 15643 / BCRC 10681 / CIP 101130 / JCM 8532 / KCTC 2640 / LMG 13131 / VPI 4355</strain>
    </source>
</reference>
<keyword id="KW-0665">Pyrimidine biosynthesis</keyword>
<keyword id="KW-1185">Reference proteome</keyword>
<keyword id="KW-0808">Transferase</keyword>
<accession>Q8RG89</accession>